<feature type="chain" id="PRO_0000096469" description="2-keto-4-pentenoate hydratase">
    <location>
        <begin position="1"/>
        <end position="269"/>
    </location>
</feature>
<feature type="sequence conflict" description="In Ref. 1; BAA13055." evidence="3" ref="1">
    <original>G</original>
    <variation>E</variation>
    <location>
        <position position="202"/>
    </location>
</feature>
<feature type="helix" evidence="5">
    <location>
        <begin position="3"/>
        <end position="19"/>
    </location>
</feature>
<feature type="helix" evidence="5">
    <location>
        <begin position="27"/>
        <end position="30"/>
    </location>
</feature>
<feature type="helix" evidence="5">
    <location>
        <begin position="35"/>
        <end position="51"/>
    </location>
</feature>
<feature type="strand" evidence="5">
    <location>
        <begin position="56"/>
        <end position="62"/>
    </location>
</feature>
<feature type="helix" evidence="5">
    <location>
        <begin position="66"/>
        <end position="70"/>
    </location>
</feature>
<feature type="turn" evidence="5">
    <location>
        <begin position="71"/>
        <end position="73"/>
    </location>
</feature>
<feature type="strand" evidence="5">
    <location>
        <begin position="78"/>
        <end position="83"/>
    </location>
</feature>
<feature type="helix" evidence="5">
    <location>
        <begin position="84"/>
        <end position="86"/>
    </location>
</feature>
<feature type="strand" evidence="5">
    <location>
        <begin position="87"/>
        <end position="89"/>
    </location>
</feature>
<feature type="strand" evidence="5">
    <location>
        <begin position="92"/>
        <end position="94"/>
    </location>
</feature>
<feature type="helix" evidence="5">
    <location>
        <begin position="96"/>
        <end position="98"/>
    </location>
</feature>
<feature type="strand" evidence="5">
    <location>
        <begin position="99"/>
        <end position="101"/>
    </location>
</feature>
<feature type="strand" evidence="5">
    <location>
        <begin position="103"/>
        <end position="114"/>
    </location>
</feature>
<feature type="helix" evidence="5">
    <location>
        <begin position="123"/>
        <end position="127"/>
    </location>
</feature>
<feature type="strand" evidence="5">
    <location>
        <begin position="130"/>
        <end position="140"/>
    </location>
</feature>
<feature type="helix" evidence="5">
    <location>
        <begin position="145"/>
        <end position="147"/>
    </location>
</feature>
<feature type="helix" evidence="5">
    <location>
        <begin position="151"/>
        <end position="156"/>
    </location>
</feature>
<feature type="helix" evidence="5">
    <location>
        <begin position="158"/>
        <end position="160"/>
    </location>
</feature>
<feature type="strand" evidence="5">
    <location>
        <begin position="163"/>
        <end position="166"/>
    </location>
</feature>
<feature type="strand" evidence="5">
    <location>
        <begin position="182"/>
        <end position="187"/>
    </location>
</feature>
<feature type="strand" evidence="5">
    <location>
        <begin position="190"/>
        <end position="196"/>
    </location>
</feature>
<feature type="helix" evidence="5">
    <location>
        <begin position="197"/>
        <end position="199"/>
    </location>
</feature>
<feature type="turn" evidence="5">
    <location>
        <begin position="200"/>
        <end position="202"/>
    </location>
</feature>
<feature type="helix" evidence="5">
    <location>
        <begin position="204"/>
        <end position="217"/>
    </location>
</feature>
<feature type="strand" evidence="5">
    <location>
        <begin position="227"/>
        <end position="234"/>
    </location>
</feature>
<feature type="strand" evidence="5">
    <location>
        <begin position="244"/>
        <end position="249"/>
    </location>
</feature>
<feature type="turn" evidence="5">
    <location>
        <begin position="250"/>
        <end position="252"/>
    </location>
</feature>
<feature type="strand" evidence="5">
    <location>
        <begin position="253"/>
        <end position="259"/>
    </location>
</feature>
<protein>
    <recommendedName>
        <fullName>2-keto-4-pentenoate hydratase</fullName>
        <ecNumber evidence="1">4.2.1.80</ecNumber>
    </recommendedName>
    <alternativeName>
        <fullName evidence="2">2-hydroxypentadienoic acid hydratase</fullName>
    </alternativeName>
</protein>
<keyword id="KW-0002">3D-structure</keyword>
<keyword id="KW-0058">Aromatic hydrocarbons catabolism</keyword>
<keyword id="KW-0903">Direct protein sequencing</keyword>
<keyword id="KW-0456">Lyase</keyword>
<keyword id="KW-1185">Reference proteome</keyword>
<organism>
    <name type="scientific">Escherichia coli (strain K12)</name>
    <dbReference type="NCBI Taxonomy" id="83333"/>
    <lineage>
        <taxon>Bacteria</taxon>
        <taxon>Pseudomonadati</taxon>
        <taxon>Pseudomonadota</taxon>
        <taxon>Gammaproteobacteria</taxon>
        <taxon>Enterobacterales</taxon>
        <taxon>Enterobacteriaceae</taxon>
        <taxon>Escherichia</taxon>
    </lineage>
</organism>
<comment type="function">
    <text evidence="1">Catalyzes the conversion of 2-hydroxypentadienoic acid (enolic form of 2-oxopent-4-enoate) to 4-hydroxy-2-ketopentanoic acid.</text>
</comment>
<comment type="catalytic activity">
    <reaction evidence="1">
        <text>(S)-4-hydroxy-2-oxopentanoate = (2Z)-2-hydroxypenta-2,4-dienoate + H2O</text>
        <dbReference type="Rhea" id="RHEA:22580"/>
        <dbReference type="ChEBI" id="CHEBI:15377"/>
        <dbReference type="ChEBI" id="CHEBI:67152"/>
        <dbReference type="ChEBI" id="CHEBI:73143"/>
        <dbReference type="EC" id="4.2.1.80"/>
    </reaction>
</comment>
<comment type="cofactor">
    <cofactor evidence="1">
        <name>Mn(2+)</name>
        <dbReference type="ChEBI" id="CHEBI:29035"/>
    </cofactor>
    <text evidence="1">Divalent metal ions. Optimum activity is obtained with Mn(2+).</text>
</comment>
<comment type="activity regulation">
    <text evidence="1">Inhibited by sodium oxalate.</text>
</comment>
<comment type="biophysicochemical properties">
    <kinetics>
        <KM evidence="1">41 uM for 2-hydroxy-pentadienoic acid (at pH 6)</KM>
        <text evidence="1">kcat is 450 sec(-1).</text>
    </kinetics>
    <phDependence>
        <text evidence="1">Optimum pH is 5.5-8.0, but decreases linearly above pH 8.3, and shows an inflection at pH 5.5.</text>
    </phDependence>
</comment>
<comment type="pathway">
    <text evidence="4">Aromatic compound metabolism; 3-phenylpropanoate degradation.</text>
</comment>
<comment type="similarity">
    <text evidence="3">Belongs to the hydratase/decarboxylase family. MhpD subfamily.</text>
</comment>
<comment type="sequence caution" evidence="3">
    <conflict type="erroneous initiation">
        <sequence resource="EMBL-CDS" id="AAB18074"/>
    </conflict>
    <text>Extended N-terminus.</text>
</comment>
<comment type="sequence caution" evidence="3">
    <conflict type="erroneous initiation">
        <sequence resource="EMBL-CDS" id="BAA13055"/>
    </conflict>
    <text>Extended N-terminus.</text>
</comment>
<sequence length="269" mass="28890">MTKHTLEQLAADLRRAAEQGEAIAPLRDLIGIDNAEAAYAIQHINVQHDVAQGRRVVGRKVGLTHPKVQQQLGVDQPDFGTLFADMCYGDNEIIPFSRVLQPRIEAEIALVLNRDLPATDITFDELYNAIEWVLPALEVVGSRIRDWSIQFVDTVADNASCGVYVIGGPAQRPAGLDLKNCAMKMTRNNEEVSSGRGSECLGHPLNAAVWLARKMASLGEPLRTGDIILTGALGPMVAVNAGDRFEAHIEGIGSVAATFSSAAPKGSLS</sequence>
<reference key="1">
    <citation type="submission" date="1996-06" db="EMBL/GenBank/DDBJ databases">
        <title>Complete sequence of the mhp operon.</title>
        <authorList>
            <person name="Kawamukai M."/>
        </authorList>
    </citation>
    <scope>NUCLEOTIDE SEQUENCE [GENOMIC DNA]</scope>
    <source>
        <strain>K12 / W3110 / ATCC 27325 / DSM 5911</strain>
    </source>
</reference>
<reference key="2">
    <citation type="journal article" date="1997" name="J. Bacteriol.">
        <title>Genetic characterization and expression in heterologous hosts of the 3-(3-hydroxyphenyl)propionate catabolic pathway of Escherichia coli K-12.</title>
        <authorList>
            <person name="Ferrandez A."/>
            <person name="Garcia J.L."/>
            <person name="Diaz E."/>
        </authorList>
    </citation>
    <scope>NUCLEOTIDE SEQUENCE [GENOMIC DNA]</scope>
    <source>
        <strain>K12 / CS520</strain>
    </source>
</reference>
<reference key="3">
    <citation type="submission" date="1997-01" db="EMBL/GenBank/DDBJ databases">
        <title>Sequence of minutes 4-25 of Escherichia coli.</title>
        <authorList>
            <person name="Chung E."/>
            <person name="Allen E."/>
            <person name="Araujo R."/>
            <person name="Aparicio A.M."/>
            <person name="Davis K."/>
            <person name="Duncan M."/>
            <person name="Federspiel N."/>
            <person name="Hyman R."/>
            <person name="Kalman S."/>
            <person name="Komp C."/>
            <person name="Kurdi O."/>
            <person name="Lew H."/>
            <person name="Lin D."/>
            <person name="Namath A."/>
            <person name="Oefner P."/>
            <person name="Roberts D."/>
            <person name="Schramm S."/>
            <person name="Davis R.W."/>
        </authorList>
    </citation>
    <scope>NUCLEOTIDE SEQUENCE [LARGE SCALE GENOMIC DNA]</scope>
    <source>
        <strain>K12 / MG1655 / ATCC 47076</strain>
    </source>
</reference>
<reference key="4">
    <citation type="journal article" date="1997" name="Science">
        <title>The complete genome sequence of Escherichia coli K-12.</title>
        <authorList>
            <person name="Blattner F.R."/>
            <person name="Plunkett G. III"/>
            <person name="Bloch C.A."/>
            <person name="Perna N.T."/>
            <person name="Burland V."/>
            <person name="Riley M."/>
            <person name="Collado-Vides J."/>
            <person name="Glasner J.D."/>
            <person name="Rode C.K."/>
            <person name="Mayhew G.F."/>
            <person name="Gregor J."/>
            <person name="Davis N.W."/>
            <person name="Kirkpatrick H.A."/>
            <person name="Goeden M.A."/>
            <person name="Rose D.J."/>
            <person name="Mau B."/>
            <person name="Shao Y."/>
        </authorList>
    </citation>
    <scope>NUCLEOTIDE SEQUENCE [LARGE SCALE GENOMIC DNA]</scope>
    <source>
        <strain>K12 / MG1655 / ATCC 47076</strain>
    </source>
</reference>
<reference key="5">
    <citation type="journal article" date="2006" name="Mol. Syst. Biol.">
        <title>Highly accurate genome sequences of Escherichia coli K-12 strains MG1655 and W3110.</title>
        <authorList>
            <person name="Hayashi K."/>
            <person name="Morooka N."/>
            <person name="Yamamoto Y."/>
            <person name="Fujita K."/>
            <person name="Isono K."/>
            <person name="Choi S."/>
            <person name="Ohtsubo E."/>
            <person name="Baba T."/>
            <person name="Wanner B.L."/>
            <person name="Mori H."/>
            <person name="Horiuchi T."/>
        </authorList>
    </citation>
    <scope>NUCLEOTIDE SEQUENCE [LARGE SCALE GENOMIC DNA]</scope>
    <source>
        <strain>K12 / W3110 / ATCC 27325 / DSM 5911</strain>
    </source>
</reference>
<reference key="6">
    <citation type="journal article" date="1998" name="Eur. J. Biochem.">
        <title>Purification, characterisation and reaction mechanism of monofunctional 2-hydroxypentadienoic acid hydratase from Escherichia coli.</title>
        <authorList>
            <person name="Pollard J.R."/>
            <person name="Bugg T.D.H."/>
        </authorList>
    </citation>
    <scope>PROTEIN SEQUENCE OF 1-6</scope>
    <scope>COFACTOR</scope>
    <scope>FUNCTION</scope>
    <scope>CATALYTIC ACTIVITY</scope>
    <scope>ACTIVITY REGULATION</scope>
    <scope>BIOPHYSICOCHEMICAL PROPERTIES</scope>
    <scope>PATHWAY</scope>
    <source>
        <strain>K12 / W3110 / ATCC 27325 / DSM 5911</strain>
    </source>
</reference>
<reference key="7">
    <citation type="submission" date="2005-01" db="PDB data bank">
        <title>Crystal structure of 2-hydroxypentadienoic acid hydratase from Escherichia coli.</title>
        <authorList>
            <consortium name="New York structural genomix research consortium (NYSGXRC)"/>
        </authorList>
    </citation>
    <scope>X-RAY CRYSTALLOGRAPHY (2.9 ANGSTROMS)</scope>
</reference>
<accession>P77608</accession>
<accession>P71205</accession>
<accession>P77045</accession>
<accession>Q2MC74</accession>
<name>MHPD_ECOLI</name>
<evidence type="ECO:0000269" key="1">
    <source>
    </source>
</evidence>
<evidence type="ECO:0000303" key="2">
    <source>
    </source>
</evidence>
<evidence type="ECO:0000305" key="3"/>
<evidence type="ECO:0000305" key="4">
    <source>
    </source>
</evidence>
<evidence type="ECO:0007829" key="5">
    <source>
        <dbReference type="PDB" id="2WQT"/>
    </source>
</evidence>
<gene>
    <name evidence="2" type="primary">mhpD</name>
    <name type="ordered locus">b0350</name>
    <name type="ordered locus">JW0341</name>
</gene>
<proteinExistence type="evidence at protein level"/>
<dbReference type="EC" id="4.2.1.80" evidence="1"/>
<dbReference type="EMBL" id="D86239">
    <property type="protein sequence ID" value="BAA13055.1"/>
    <property type="status" value="ALT_INIT"/>
    <property type="molecule type" value="Genomic_DNA"/>
</dbReference>
<dbReference type="EMBL" id="Y09555">
    <property type="protein sequence ID" value="CAA70750.1"/>
    <property type="molecule type" value="Genomic_DNA"/>
</dbReference>
<dbReference type="EMBL" id="U73857">
    <property type="protein sequence ID" value="AAB18074.1"/>
    <property type="status" value="ALT_INIT"/>
    <property type="molecule type" value="Genomic_DNA"/>
</dbReference>
<dbReference type="EMBL" id="U00096">
    <property type="protein sequence ID" value="AAC73453.2"/>
    <property type="molecule type" value="Genomic_DNA"/>
</dbReference>
<dbReference type="EMBL" id="AP009048">
    <property type="protein sequence ID" value="BAE76132.1"/>
    <property type="molecule type" value="Genomic_DNA"/>
</dbReference>
<dbReference type="PIR" id="F64762">
    <property type="entry name" value="F64762"/>
</dbReference>
<dbReference type="RefSeq" id="NP_414884.2">
    <property type="nucleotide sequence ID" value="NC_000913.3"/>
</dbReference>
<dbReference type="RefSeq" id="WP_000160710.1">
    <property type="nucleotide sequence ID" value="NZ_SSZK01000061.1"/>
</dbReference>
<dbReference type="PDB" id="1SV6">
    <property type="method" value="X-ray"/>
    <property type="resolution" value="2.90 A"/>
    <property type="chains" value="A/B/C/D/E=1-269"/>
</dbReference>
<dbReference type="PDB" id="2WQT">
    <property type="method" value="X-ray"/>
    <property type="resolution" value="2.80 A"/>
    <property type="chains" value="A/B/C/D/E/F/G/H/I/J/K/L/M/N/O/P/Q/R/S/T=1-269"/>
</dbReference>
<dbReference type="PDBsum" id="1SV6"/>
<dbReference type="PDBsum" id="2WQT"/>
<dbReference type="SMR" id="P77608"/>
<dbReference type="BioGRID" id="4260731">
    <property type="interactions" value="8"/>
</dbReference>
<dbReference type="FunCoup" id="P77608">
    <property type="interactions" value="97"/>
</dbReference>
<dbReference type="IntAct" id="P77608">
    <property type="interactions" value="3"/>
</dbReference>
<dbReference type="STRING" id="511145.b0350"/>
<dbReference type="SwissLipids" id="SLP:000001886"/>
<dbReference type="jPOST" id="P77608"/>
<dbReference type="PaxDb" id="511145-b0350"/>
<dbReference type="EnsemblBacteria" id="AAC73453">
    <property type="protein sequence ID" value="AAC73453"/>
    <property type="gene ID" value="b0350"/>
</dbReference>
<dbReference type="GeneID" id="944768"/>
<dbReference type="KEGG" id="ecj:JW0341"/>
<dbReference type="KEGG" id="eco:b0350"/>
<dbReference type="KEGG" id="ecoc:C3026_24885"/>
<dbReference type="PATRIC" id="fig|1411691.4.peg.1928"/>
<dbReference type="EchoBASE" id="EB4022"/>
<dbReference type="eggNOG" id="COG3971">
    <property type="taxonomic scope" value="Bacteria"/>
</dbReference>
<dbReference type="HOGENOM" id="CLU_060136_4_1_6"/>
<dbReference type="InParanoid" id="P77608"/>
<dbReference type="OMA" id="IRDWSIG"/>
<dbReference type="OrthoDB" id="9792137at2"/>
<dbReference type="PhylomeDB" id="P77608"/>
<dbReference type="BioCyc" id="EcoCyc:MHPDHYDROL-MONOMER"/>
<dbReference type="BioCyc" id="MetaCyc:MHPDHYDROL-MONOMER"/>
<dbReference type="BRENDA" id="4.2.1.80">
    <property type="organism ID" value="2165"/>
</dbReference>
<dbReference type="SABIO-RK" id="P77608"/>
<dbReference type="UniPathway" id="UPA00714"/>
<dbReference type="EvolutionaryTrace" id="P77608"/>
<dbReference type="PRO" id="PR:P77608"/>
<dbReference type="Proteomes" id="UP000000625">
    <property type="component" value="Chromosome"/>
</dbReference>
<dbReference type="GO" id="GO:0005737">
    <property type="term" value="C:cytoplasm"/>
    <property type="evidence" value="ECO:0000314"/>
    <property type="project" value="EcoliWiki"/>
</dbReference>
<dbReference type="GO" id="GO:0008684">
    <property type="term" value="F:2-oxopent-4-enoate hydratase activity"/>
    <property type="evidence" value="ECO:0000314"/>
    <property type="project" value="EcoCyc"/>
</dbReference>
<dbReference type="GO" id="GO:0042802">
    <property type="term" value="F:identical protein binding"/>
    <property type="evidence" value="ECO:0000314"/>
    <property type="project" value="EcoCyc"/>
</dbReference>
<dbReference type="GO" id="GO:0030145">
    <property type="term" value="F:manganese ion binding"/>
    <property type="evidence" value="ECO:0000314"/>
    <property type="project" value="EcoCyc"/>
</dbReference>
<dbReference type="GO" id="GO:0019380">
    <property type="term" value="P:3-phenylpropionate catabolic process"/>
    <property type="evidence" value="ECO:0007669"/>
    <property type="project" value="UniProtKB-UniRule"/>
</dbReference>
<dbReference type="FunFam" id="3.90.850.10:FF:000006">
    <property type="entry name" value="2-keto-4-pentenoate hydratase"/>
    <property type="match status" value="1"/>
</dbReference>
<dbReference type="Gene3D" id="3.90.850.10">
    <property type="entry name" value="Fumarylacetoacetase-like, C-terminal domain"/>
    <property type="match status" value="1"/>
</dbReference>
<dbReference type="HAMAP" id="MF_01655">
    <property type="entry name" value="MhpD"/>
    <property type="match status" value="1"/>
</dbReference>
<dbReference type="InterPro" id="IPR011234">
    <property type="entry name" value="Fumarylacetoacetase-like_C"/>
</dbReference>
<dbReference type="InterPro" id="IPR036663">
    <property type="entry name" value="Fumarylacetoacetase_C_sf"/>
</dbReference>
<dbReference type="InterPro" id="IPR050772">
    <property type="entry name" value="Hydratase-Decarb/MhpD_sf"/>
</dbReference>
<dbReference type="InterPro" id="IPR023793">
    <property type="entry name" value="Keto_pentenoate-hydratase"/>
</dbReference>
<dbReference type="NCBIfam" id="NF008461">
    <property type="entry name" value="PRK11342.1"/>
    <property type="match status" value="1"/>
</dbReference>
<dbReference type="PANTHER" id="PTHR30143:SF0">
    <property type="entry name" value="2-KETO-4-PENTENOATE HYDRATASE"/>
    <property type="match status" value="1"/>
</dbReference>
<dbReference type="PANTHER" id="PTHR30143">
    <property type="entry name" value="ACID HYDRATASE"/>
    <property type="match status" value="1"/>
</dbReference>
<dbReference type="Pfam" id="PF01557">
    <property type="entry name" value="FAA_hydrolase"/>
    <property type="match status" value="1"/>
</dbReference>
<dbReference type="SUPFAM" id="SSF56529">
    <property type="entry name" value="FAH"/>
    <property type="match status" value="1"/>
</dbReference>